<accession>Q7Z893</accession>
<dbReference type="EC" id="1.3.98.1"/>
<dbReference type="EMBL" id="AY323901">
    <property type="protein sequence ID" value="AAQ01778.1"/>
    <property type="molecule type" value="Genomic_DNA"/>
</dbReference>
<dbReference type="SMR" id="Q7Z893"/>
<dbReference type="UniPathway" id="UPA00070"/>
<dbReference type="GO" id="GO:0005737">
    <property type="term" value="C:cytoplasm"/>
    <property type="evidence" value="ECO:0007669"/>
    <property type="project" value="UniProtKB-SubCell"/>
</dbReference>
<dbReference type="GO" id="GO:1990663">
    <property type="term" value="F:dihydroorotate dehydrogenase (fumarate) activity"/>
    <property type="evidence" value="ECO:0007669"/>
    <property type="project" value="UniProtKB-EC"/>
</dbReference>
<dbReference type="GO" id="GO:0006207">
    <property type="term" value="P:'de novo' pyrimidine nucleobase biosynthetic process"/>
    <property type="evidence" value="ECO:0007669"/>
    <property type="project" value="InterPro"/>
</dbReference>
<dbReference type="GO" id="GO:0044205">
    <property type="term" value="P:'de novo' UMP biosynthetic process"/>
    <property type="evidence" value="ECO:0007669"/>
    <property type="project" value="UniProtKB-UniPathway"/>
</dbReference>
<dbReference type="CDD" id="cd04741">
    <property type="entry name" value="DHOD_1A_like"/>
    <property type="match status" value="1"/>
</dbReference>
<dbReference type="FunFam" id="3.20.20.70:FF:000027">
    <property type="entry name" value="Dihydropyrimidine dehydrogenase [NADP(+)]"/>
    <property type="match status" value="1"/>
</dbReference>
<dbReference type="Gene3D" id="3.20.20.70">
    <property type="entry name" value="Aldolase class I"/>
    <property type="match status" value="1"/>
</dbReference>
<dbReference type="Gene3D" id="2.30.26.10">
    <property type="entry name" value="Dihydroorotate Dehydrogenase A, chain A, domain 2"/>
    <property type="match status" value="1"/>
</dbReference>
<dbReference type="HAMAP" id="MF_00224">
    <property type="entry name" value="DHO_dh_type1"/>
    <property type="match status" value="1"/>
</dbReference>
<dbReference type="InterPro" id="IPR013785">
    <property type="entry name" value="Aldolase_TIM"/>
</dbReference>
<dbReference type="InterPro" id="IPR050074">
    <property type="entry name" value="DHO_dehydrogenase"/>
</dbReference>
<dbReference type="InterPro" id="IPR033886">
    <property type="entry name" value="DHOD_1A"/>
</dbReference>
<dbReference type="InterPro" id="IPR023359">
    <property type="entry name" value="Dihydro_DH_chainA_dom2"/>
</dbReference>
<dbReference type="InterPro" id="IPR024920">
    <property type="entry name" value="Dihydroorotate_DH_1"/>
</dbReference>
<dbReference type="InterPro" id="IPR012135">
    <property type="entry name" value="Dihydroorotate_DH_1_2"/>
</dbReference>
<dbReference type="InterPro" id="IPR005720">
    <property type="entry name" value="Dihydroorotate_DH_cat"/>
</dbReference>
<dbReference type="InterPro" id="IPR001295">
    <property type="entry name" value="Dihydroorotate_DH_CS"/>
</dbReference>
<dbReference type="NCBIfam" id="NF002702">
    <property type="entry name" value="PRK02506.1"/>
    <property type="match status" value="1"/>
</dbReference>
<dbReference type="PANTHER" id="PTHR48109:SF1">
    <property type="entry name" value="DIHYDROOROTATE DEHYDROGENASE (FUMARATE)"/>
    <property type="match status" value="1"/>
</dbReference>
<dbReference type="PANTHER" id="PTHR48109">
    <property type="entry name" value="DIHYDROOROTATE DEHYDROGENASE (QUINONE), MITOCHONDRIAL-RELATED"/>
    <property type="match status" value="1"/>
</dbReference>
<dbReference type="Pfam" id="PF01180">
    <property type="entry name" value="DHO_dh"/>
    <property type="match status" value="1"/>
</dbReference>
<dbReference type="PIRSF" id="PIRSF000164">
    <property type="entry name" value="DHO_oxidase"/>
    <property type="match status" value="1"/>
</dbReference>
<dbReference type="SUPFAM" id="SSF51395">
    <property type="entry name" value="FMN-linked oxidoreductases"/>
    <property type="match status" value="1"/>
</dbReference>
<dbReference type="PROSITE" id="PS00911">
    <property type="entry name" value="DHODEHASE_1"/>
    <property type="match status" value="1"/>
</dbReference>
<dbReference type="PROSITE" id="PS00912">
    <property type="entry name" value="DHODEHASE_2"/>
    <property type="match status" value="1"/>
</dbReference>
<gene>
    <name type="primary">URA1</name>
</gene>
<keyword id="KW-0963">Cytoplasm</keyword>
<keyword id="KW-0285">Flavoprotein</keyword>
<keyword id="KW-0288">FMN</keyword>
<keyword id="KW-0560">Oxidoreductase</keyword>
<keyword id="KW-0665">Pyrimidine biosynthesis</keyword>
<feature type="chain" id="PRO_0000148504" description="Dihydroorotate dehydrogenase (fumarate)">
    <location>
        <begin position="1"/>
        <end position="314"/>
    </location>
</feature>
<feature type="active site" description="Nucleophile" evidence="1">
    <location>
        <position position="132"/>
    </location>
</feature>
<feature type="active site" description="Nucleophile" evidence="1">
    <location>
        <position position="133"/>
    </location>
</feature>
<feature type="binding site" evidence="1">
    <location>
        <begin position="46"/>
        <end position="47"/>
    </location>
    <ligand>
        <name>FMN</name>
        <dbReference type="ChEBI" id="CHEBI:58210"/>
    </ligand>
</feature>
<feature type="binding site" evidence="1">
    <location>
        <position position="46"/>
    </location>
    <ligand>
        <name>substrate</name>
    </ligand>
</feature>
<feature type="binding site" evidence="1">
    <location>
        <begin position="70"/>
        <end position="74"/>
    </location>
    <ligand>
        <name>substrate</name>
    </ligand>
</feature>
<feature type="binding site" evidence="1">
    <location>
        <position position="130"/>
    </location>
    <ligand>
        <name>FMN</name>
        <dbReference type="ChEBI" id="CHEBI:58210"/>
    </ligand>
</feature>
<feature type="binding site" evidence="1">
    <location>
        <position position="130"/>
    </location>
    <ligand>
        <name>substrate</name>
    </ligand>
</feature>
<feature type="binding site" evidence="1">
    <location>
        <position position="167"/>
    </location>
    <ligand>
        <name>FMN</name>
        <dbReference type="ChEBI" id="CHEBI:58210"/>
    </ligand>
</feature>
<feature type="binding site" evidence="1">
    <location>
        <position position="195"/>
    </location>
    <ligand>
        <name>FMN</name>
        <dbReference type="ChEBI" id="CHEBI:58210"/>
    </ligand>
</feature>
<feature type="binding site" evidence="1">
    <location>
        <begin position="196"/>
        <end position="197"/>
    </location>
    <ligand>
        <name>substrate</name>
    </ligand>
</feature>
<feature type="binding site" evidence="1">
    <location>
        <position position="224"/>
    </location>
    <ligand>
        <name>FMN</name>
        <dbReference type="ChEBI" id="CHEBI:58210"/>
    </ligand>
</feature>
<feature type="binding site" evidence="1">
    <location>
        <begin position="252"/>
        <end position="253"/>
    </location>
    <ligand>
        <name>FMN</name>
        <dbReference type="ChEBI" id="CHEBI:58210"/>
    </ligand>
</feature>
<feature type="binding site" evidence="1">
    <location>
        <begin position="274"/>
        <end position="275"/>
    </location>
    <ligand>
        <name>FMN</name>
        <dbReference type="ChEBI" id="CHEBI:58210"/>
    </ligand>
</feature>
<organism>
    <name type="scientific">Saccharomyces mikatae</name>
    <name type="common">Yeast</name>
    <dbReference type="NCBI Taxonomy" id="114525"/>
    <lineage>
        <taxon>Eukaryota</taxon>
        <taxon>Fungi</taxon>
        <taxon>Dikarya</taxon>
        <taxon>Ascomycota</taxon>
        <taxon>Saccharomycotina</taxon>
        <taxon>Saccharomycetes</taxon>
        <taxon>Saccharomycetales</taxon>
        <taxon>Saccharomycetaceae</taxon>
        <taxon>Saccharomyces</taxon>
    </lineage>
</organism>
<reference key="1">
    <citation type="journal article" date="2005" name="Eukaryot. Cell">
        <title>Contribution of horizontal gene transfer to the evolution of Saccharomyces cerevisiae.</title>
        <authorList>
            <person name="Hall C.R."/>
            <person name="Brachat S."/>
            <person name="Dietrich F.S."/>
        </authorList>
    </citation>
    <scope>NUCLEOTIDE SEQUENCE [GENOMIC DNA]</scope>
    <source>
        <strain>ATCC MYA-4448 / CBS 8839 / NBRC 1815 / NCYC 2888</strain>
    </source>
</reference>
<protein>
    <recommendedName>
        <fullName>Dihydroorotate dehydrogenase (fumarate)</fullName>
        <shortName>DHOD</shortName>
        <shortName>DHODase</shortName>
        <shortName>DHOdehase</shortName>
        <ecNumber>1.3.98.1</ecNumber>
    </recommendedName>
    <alternativeName>
        <fullName>Dihydroorotate oxidase</fullName>
    </alternativeName>
</protein>
<proteinExistence type="inferred from homology"/>
<name>PYRD_SACMI</name>
<sequence>MTASLTTKFLNNTYENPFMNASGVHCMTTEELDELADSKAGAFITKSATTLEREGNPKPRYISVPLGSINSMGLPNEGIDYYLSYVLNRQKKYPDAPAIFFSVAGMSIDENLNLLKKIQDSEFNGITELNLSCPNVPGKPQVAYDFELTKETLEKVFVFFKKPLGIKLPPYFDFAHFDIIAKILNEFPLAYVNSINSIGNGLFIDVEKESVVVKPKNGFGGIGGEYVKPTALANVRAFYTRLRPDIKVIGTGGIKSGKDAFEHLLCGASMLQIGTELQKEGVKIFERIEKELKDIMEAKGYTSIDQFRGKLNSL</sequence>
<comment type="function">
    <text evidence="1">Catalyzes the conversion of dihydroorotate to orotate with fumarate as the electron acceptor.</text>
</comment>
<comment type="catalytic activity">
    <reaction>
        <text>(S)-dihydroorotate + fumarate = orotate + succinate</text>
        <dbReference type="Rhea" id="RHEA:30059"/>
        <dbReference type="ChEBI" id="CHEBI:29806"/>
        <dbReference type="ChEBI" id="CHEBI:30031"/>
        <dbReference type="ChEBI" id="CHEBI:30839"/>
        <dbReference type="ChEBI" id="CHEBI:30864"/>
        <dbReference type="EC" id="1.3.98.1"/>
    </reaction>
</comment>
<comment type="cofactor">
    <cofactor evidence="1">
        <name>FMN</name>
        <dbReference type="ChEBI" id="CHEBI:58210"/>
    </cofactor>
    <text evidence="1">Binds 1 FMN per subunit.</text>
</comment>
<comment type="pathway">
    <text>Pyrimidine metabolism; UMP biosynthesis via de novo pathway.</text>
</comment>
<comment type="subunit">
    <text evidence="1">Homodimer.</text>
</comment>
<comment type="subcellular location">
    <subcellularLocation>
        <location evidence="1">Cytoplasm</location>
    </subcellularLocation>
</comment>
<comment type="similarity">
    <text evidence="2">Belongs to the dihydroorotate dehydrogenase family. Type 1 subfamily.</text>
</comment>
<evidence type="ECO:0000250" key="1"/>
<evidence type="ECO:0000305" key="2"/>